<accession>B2V7C0</accession>
<reference key="1">
    <citation type="journal article" date="2009" name="J. Bacteriol.">
        <title>Complete and draft genome sequences of six members of the Aquificales.</title>
        <authorList>
            <person name="Reysenbach A.-L."/>
            <person name="Hamamura N."/>
            <person name="Podar M."/>
            <person name="Griffiths E."/>
            <person name="Ferreira S."/>
            <person name="Hochstein R."/>
            <person name="Heidelberg J."/>
            <person name="Johnson J."/>
            <person name="Mead D."/>
            <person name="Pohorille A."/>
            <person name="Sarmiento M."/>
            <person name="Schweighofer K."/>
            <person name="Seshadri R."/>
            <person name="Voytek M.A."/>
        </authorList>
    </citation>
    <scope>NUCLEOTIDE SEQUENCE [LARGE SCALE GENOMIC DNA]</scope>
    <source>
        <strain>YO3AOP1</strain>
    </source>
</reference>
<keyword id="KW-0028">Amino-acid biosynthesis</keyword>
<keyword id="KW-0057">Aromatic amino acid biosynthesis</keyword>
<keyword id="KW-0274">FAD</keyword>
<keyword id="KW-0285">Flavoprotein</keyword>
<keyword id="KW-0288">FMN</keyword>
<keyword id="KW-0456">Lyase</keyword>
<keyword id="KW-0521">NADP</keyword>
<comment type="function">
    <text evidence="1">Catalyzes the anti-1,4-elimination of the C-3 phosphate and the C-6 proR hydrogen from 5-enolpyruvylshikimate-3-phosphate (EPSP) to yield chorismate, which is the branch point compound that serves as the starting substrate for the three terminal pathways of aromatic amino acid biosynthesis. This reaction introduces a second double bond into the aromatic ring system.</text>
</comment>
<comment type="catalytic activity">
    <reaction evidence="1">
        <text>5-O-(1-carboxyvinyl)-3-phosphoshikimate = chorismate + phosphate</text>
        <dbReference type="Rhea" id="RHEA:21020"/>
        <dbReference type="ChEBI" id="CHEBI:29748"/>
        <dbReference type="ChEBI" id="CHEBI:43474"/>
        <dbReference type="ChEBI" id="CHEBI:57701"/>
        <dbReference type="EC" id="4.2.3.5"/>
    </reaction>
</comment>
<comment type="cofactor">
    <cofactor evidence="1">
        <name>FMNH2</name>
        <dbReference type="ChEBI" id="CHEBI:57618"/>
    </cofactor>
    <text evidence="1">Reduced FMN (FMNH(2)).</text>
</comment>
<comment type="pathway">
    <text evidence="1">Metabolic intermediate biosynthesis; chorismate biosynthesis; chorismate from D-erythrose 4-phosphate and phosphoenolpyruvate: step 7/7.</text>
</comment>
<comment type="subunit">
    <text evidence="1">Homotetramer.</text>
</comment>
<comment type="similarity">
    <text evidence="1">Belongs to the chorismate synthase family.</text>
</comment>
<organism>
    <name type="scientific">Sulfurihydrogenibium sp. (strain YO3AOP1)</name>
    <dbReference type="NCBI Taxonomy" id="436114"/>
    <lineage>
        <taxon>Bacteria</taxon>
        <taxon>Pseudomonadati</taxon>
        <taxon>Aquificota</taxon>
        <taxon>Aquificia</taxon>
        <taxon>Aquificales</taxon>
        <taxon>Hydrogenothermaceae</taxon>
        <taxon>Sulfurihydrogenibium</taxon>
    </lineage>
</organism>
<gene>
    <name evidence="1" type="primary">aroC</name>
    <name type="ordered locus">SYO3AOP1_1754</name>
</gene>
<feature type="chain" id="PRO_1000115408" description="Chorismate synthase">
    <location>
        <begin position="1"/>
        <end position="390"/>
    </location>
</feature>
<feature type="binding site" evidence="1">
    <location>
        <position position="40"/>
    </location>
    <ligand>
        <name>NADP(+)</name>
        <dbReference type="ChEBI" id="CHEBI:58349"/>
    </ligand>
</feature>
<feature type="binding site" evidence="1">
    <location>
        <position position="46"/>
    </location>
    <ligand>
        <name>NADP(+)</name>
        <dbReference type="ChEBI" id="CHEBI:58349"/>
    </ligand>
</feature>
<feature type="binding site" evidence="1">
    <location>
        <begin position="128"/>
        <end position="130"/>
    </location>
    <ligand>
        <name>FMN</name>
        <dbReference type="ChEBI" id="CHEBI:58210"/>
    </ligand>
</feature>
<feature type="binding site" evidence="1">
    <location>
        <begin position="251"/>
        <end position="252"/>
    </location>
    <ligand>
        <name>FMN</name>
        <dbReference type="ChEBI" id="CHEBI:58210"/>
    </ligand>
</feature>
<feature type="binding site" evidence="1">
    <location>
        <position position="296"/>
    </location>
    <ligand>
        <name>FMN</name>
        <dbReference type="ChEBI" id="CHEBI:58210"/>
    </ligand>
</feature>
<feature type="binding site" evidence="1">
    <location>
        <begin position="311"/>
        <end position="315"/>
    </location>
    <ligand>
        <name>FMN</name>
        <dbReference type="ChEBI" id="CHEBI:58210"/>
    </ligand>
</feature>
<feature type="binding site" evidence="1">
    <location>
        <position position="339"/>
    </location>
    <ligand>
        <name>FMN</name>
        <dbReference type="ChEBI" id="CHEBI:58210"/>
    </ligand>
</feature>
<dbReference type="EC" id="4.2.3.5" evidence="1"/>
<dbReference type="EMBL" id="CP001080">
    <property type="protein sequence ID" value="ACD67351.1"/>
    <property type="molecule type" value="Genomic_DNA"/>
</dbReference>
<dbReference type="RefSeq" id="WP_012460406.1">
    <property type="nucleotide sequence ID" value="NC_010730.1"/>
</dbReference>
<dbReference type="SMR" id="B2V7C0"/>
<dbReference type="STRING" id="436114.SYO3AOP1_1754"/>
<dbReference type="KEGG" id="sul:SYO3AOP1_1754"/>
<dbReference type="eggNOG" id="COG0082">
    <property type="taxonomic scope" value="Bacteria"/>
</dbReference>
<dbReference type="HOGENOM" id="CLU_034547_2_0_0"/>
<dbReference type="UniPathway" id="UPA00053">
    <property type="reaction ID" value="UER00090"/>
</dbReference>
<dbReference type="GO" id="GO:0005829">
    <property type="term" value="C:cytosol"/>
    <property type="evidence" value="ECO:0007669"/>
    <property type="project" value="TreeGrafter"/>
</dbReference>
<dbReference type="GO" id="GO:0004107">
    <property type="term" value="F:chorismate synthase activity"/>
    <property type="evidence" value="ECO:0007669"/>
    <property type="project" value="UniProtKB-UniRule"/>
</dbReference>
<dbReference type="GO" id="GO:0010181">
    <property type="term" value="F:FMN binding"/>
    <property type="evidence" value="ECO:0007669"/>
    <property type="project" value="TreeGrafter"/>
</dbReference>
<dbReference type="GO" id="GO:0008652">
    <property type="term" value="P:amino acid biosynthetic process"/>
    <property type="evidence" value="ECO:0007669"/>
    <property type="project" value="UniProtKB-KW"/>
</dbReference>
<dbReference type="GO" id="GO:0009073">
    <property type="term" value="P:aromatic amino acid family biosynthetic process"/>
    <property type="evidence" value="ECO:0007669"/>
    <property type="project" value="UniProtKB-KW"/>
</dbReference>
<dbReference type="GO" id="GO:0009423">
    <property type="term" value="P:chorismate biosynthetic process"/>
    <property type="evidence" value="ECO:0007669"/>
    <property type="project" value="UniProtKB-UniRule"/>
</dbReference>
<dbReference type="CDD" id="cd07304">
    <property type="entry name" value="Chorismate_synthase"/>
    <property type="match status" value="1"/>
</dbReference>
<dbReference type="FunFam" id="3.60.150.10:FF:000002">
    <property type="entry name" value="Chorismate synthase"/>
    <property type="match status" value="1"/>
</dbReference>
<dbReference type="Gene3D" id="3.60.150.10">
    <property type="entry name" value="Chorismate synthase AroC"/>
    <property type="match status" value="1"/>
</dbReference>
<dbReference type="HAMAP" id="MF_00300">
    <property type="entry name" value="Chorismate_synth"/>
    <property type="match status" value="1"/>
</dbReference>
<dbReference type="InterPro" id="IPR000453">
    <property type="entry name" value="Chorismate_synth"/>
</dbReference>
<dbReference type="InterPro" id="IPR035904">
    <property type="entry name" value="Chorismate_synth_AroC_sf"/>
</dbReference>
<dbReference type="InterPro" id="IPR020541">
    <property type="entry name" value="Chorismate_synthase_CS"/>
</dbReference>
<dbReference type="NCBIfam" id="TIGR00033">
    <property type="entry name" value="aroC"/>
    <property type="match status" value="1"/>
</dbReference>
<dbReference type="NCBIfam" id="NF003793">
    <property type="entry name" value="PRK05382.1"/>
    <property type="match status" value="1"/>
</dbReference>
<dbReference type="PANTHER" id="PTHR21085">
    <property type="entry name" value="CHORISMATE SYNTHASE"/>
    <property type="match status" value="1"/>
</dbReference>
<dbReference type="PANTHER" id="PTHR21085:SF0">
    <property type="entry name" value="CHORISMATE SYNTHASE"/>
    <property type="match status" value="1"/>
</dbReference>
<dbReference type="Pfam" id="PF01264">
    <property type="entry name" value="Chorismate_synt"/>
    <property type="match status" value="1"/>
</dbReference>
<dbReference type="PIRSF" id="PIRSF001456">
    <property type="entry name" value="Chorismate_synth"/>
    <property type="match status" value="1"/>
</dbReference>
<dbReference type="SUPFAM" id="SSF103263">
    <property type="entry name" value="Chorismate synthase, AroC"/>
    <property type="match status" value="1"/>
</dbReference>
<dbReference type="PROSITE" id="PS00787">
    <property type="entry name" value="CHORISMATE_SYNTHASE_1"/>
    <property type="match status" value="1"/>
</dbReference>
<dbReference type="PROSITE" id="PS00788">
    <property type="entry name" value="CHORISMATE_SYNTHASE_2"/>
    <property type="match status" value="1"/>
</dbReference>
<evidence type="ECO:0000255" key="1">
    <source>
        <dbReference type="HAMAP-Rule" id="MF_00300"/>
    </source>
</evidence>
<proteinExistence type="inferred from homology"/>
<sequence length="390" mass="43440">MLRFLNAGESHGPALTAIIEGYPSNVKITTDRINKELARRQKGYGRGGRMKIEKDTVEILSGVRFGITLGSPITLVVRNKDWENWTDIMAIEGDSTNKRQILEPRPGHADLTGGIKYGFYDLRNILERASARETTTRVAVGALCKILLEDIGIKIGSYVLSIGEKKIDKSEIESISYEDRFNNAENSELRLPILGKDEEFKEYIDKAKEDGESLGGIFEVYALNVPVGLGSYSQWDTRLDGKIAQAIMSIQAIKGVEIGEGFNLAYLPGSQAHDEIFYSKERGFYRKTNRAGGLEGGMTNGEPIIVRAAMKPIPTLMRHKSLQSVNVITKEPFDAAKERSDITAVPAAAVVAESMLAFVLAREILEKFGSDNWIQIKERIEKYRQDVLNY</sequence>
<protein>
    <recommendedName>
        <fullName evidence="1">Chorismate synthase</fullName>
        <shortName evidence="1">CS</shortName>
        <ecNumber evidence="1">4.2.3.5</ecNumber>
    </recommendedName>
    <alternativeName>
        <fullName evidence="1">5-enolpyruvylshikimate-3-phosphate phospholyase</fullName>
    </alternativeName>
</protein>
<name>AROC_SULSY</name>